<feature type="chain" id="PRO_0000389719" description="Acetyl-coenzyme A carboxylase carboxyl transferase subunit beta">
    <location>
        <begin position="1"/>
        <end position="305"/>
    </location>
</feature>
<feature type="domain" description="CoA carboxyltransferase N-terminal" evidence="2">
    <location>
        <begin position="27"/>
        <end position="296"/>
    </location>
</feature>
<feature type="zinc finger region" description="C4-type" evidence="1">
    <location>
        <begin position="31"/>
        <end position="53"/>
    </location>
</feature>
<feature type="binding site" evidence="1">
    <location>
        <position position="31"/>
    </location>
    <ligand>
        <name>Zn(2+)</name>
        <dbReference type="ChEBI" id="CHEBI:29105"/>
    </ligand>
</feature>
<feature type="binding site" evidence="1">
    <location>
        <position position="34"/>
    </location>
    <ligand>
        <name>Zn(2+)</name>
        <dbReference type="ChEBI" id="CHEBI:29105"/>
    </ligand>
</feature>
<feature type="binding site" evidence="1">
    <location>
        <position position="50"/>
    </location>
    <ligand>
        <name>Zn(2+)</name>
        <dbReference type="ChEBI" id="CHEBI:29105"/>
    </ligand>
</feature>
<feature type="binding site" evidence="1">
    <location>
        <position position="53"/>
    </location>
    <ligand>
        <name>Zn(2+)</name>
        <dbReference type="ChEBI" id="CHEBI:29105"/>
    </ligand>
</feature>
<comment type="function">
    <text evidence="1">Component of the acetyl coenzyme A carboxylase (ACC) complex. Biotin carboxylase (BC) catalyzes the carboxylation of biotin on its carrier protein (BCCP) and then the CO(2) group is transferred by the transcarboxylase to acetyl-CoA to form malonyl-CoA.</text>
</comment>
<comment type="catalytic activity">
    <reaction evidence="1">
        <text>N(6)-carboxybiotinyl-L-lysyl-[protein] + acetyl-CoA = N(6)-biotinyl-L-lysyl-[protein] + malonyl-CoA</text>
        <dbReference type="Rhea" id="RHEA:54728"/>
        <dbReference type="Rhea" id="RHEA-COMP:10505"/>
        <dbReference type="Rhea" id="RHEA-COMP:10506"/>
        <dbReference type="ChEBI" id="CHEBI:57288"/>
        <dbReference type="ChEBI" id="CHEBI:57384"/>
        <dbReference type="ChEBI" id="CHEBI:83144"/>
        <dbReference type="ChEBI" id="CHEBI:83145"/>
        <dbReference type="EC" id="2.1.3.15"/>
    </reaction>
</comment>
<comment type="cofactor">
    <cofactor evidence="1">
        <name>Zn(2+)</name>
        <dbReference type="ChEBI" id="CHEBI:29105"/>
    </cofactor>
    <text evidence="1">Binds 1 zinc ion per subunit.</text>
</comment>
<comment type="pathway">
    <text evidence="1">Lipid metabolism; malonyl-CoA biosynthesis; malonyl-CoA from acetyl-CoA: step 1/1.</text>
</comment>
<comment type="subunit">
    <text evidence="1">Acetyl-CoA carboxylase is a heterohexamer composed of biotin carboxyl carrier protein (AccB), biotin carboxylase (AccC) and two subunits each of ACCase subunit alpha (AccA) and ACCase subunit beta (AccD).</text>
</comment>
<comment type="subcellular location">
    <subcellularLocation>
        <location evidence="1">Cytoplasm</location>
    </subcellularLocation>
</comment>
<comment type="similarity">
    <text evidence="1">Belongs to the AccD/PCCB family.</text>
</comment>
<organism>
    <name type="scientific">Chloroflexus aurantiacus (strain ATCC 29364 / DSM 637 / Y-400-fl)</name>
    <dbReference type="NCBI Taxonomy" id="480224"/>
    <lineage>
        <taxon>Bacteria</taxon>
        <taxon>Bacillati</taxon>
        <taxon>Chloroflexota</taxon>
        <taxon>Chloroflexia</taxon>
        <taxon>Chloroflexales</taxon>
        <taxon>Chloroflexineae</taxon>
        <taxon>Chloroflexaceae</taxon>
        <taxon>Chloroflexus</taxon>
    </lineage>
</organism>
<protein>
    <recommendedName>
        <fullName evidence="1">Acetyl-coenzyme A carboxylase carboxyl transferase subunit beta</fullName>
        <shortName evidence="1">ACCase subunit beta</shortName>
        <shortName evidence="1">Acetyl-CoA carboxylase carboxyltransferase subunit beta</shortName>
        <ecNumber evidence="1">2.1.3.15</ecNumber>
    </recommendedName>
</protein>
<proteinExistence type="inferred from homology"/>
<name>ACCD_CHLSY</name>
<accession>B9LE80</accession>
<reference key="1">
    <citation type="submission" date="2009-01" db="EMBL/GenBank/DDBJ databases">
        <title>Complete sequence of Chloroflexus sp. Y-400-fl.</title>
        <authorList>
            <consortium name="US DOE Joint Genome Institute"/>
            <person name="Lucas S."/>
            <person name="Copeland A."/>
            <person name="Lapidus A."/>
            <person name="Glavina del Rio T."/>
            <person name="Dalin E."/>
            <person name="Tice H."/>
            <person name="Bruce D."/>
            <person name="Goodwin L."/>
            <person name="Pitluck S."/>
            <person name="Sims D."/>
            <person name="Kiss H."/>
            <person name="Brettin T."/>
            <person name="Detter J.C."/>
            <person name="Han C."/>
            <person name="Larimer F."/>
            <person name="Land M."/>
            <person name="Hauser L."/>
            <person name="Kyrpides N."/>
            <person name="Ovchinnikova G."/>
            <person name="Bryant D.A."/>
            <person name="Richardson P."/>
        </authorList>
    </citation>
    <scope>NUCLEOTIDE SEQUENCE [LARGE SCALE GENOMIC DNA]</scope>
    <source>
        <strain>ATCC 29364 / DSM 637 / Y-400-fl</strain>
    </source>
</reference>
<keyword id="KW-0067">ATP-binding</keyword>
<keyword id="KW-0963">Cytoplasm</keyword>
<keyword id="KW-0275">Fatty acid biosynthesis</keyword>
<keyword id="KW-0276">Fatty acid metabolism</keyword>
<keyword id="KW-0444">Lipid biosynthesis</keyword>
<keyword id="KW-0443">Lipid metabolism</keyword>
<keyword id="KW-0479">Metal-binding</keyword>
<keyword id="KW-0547">Nucleotide-binding</keyword>
<keyword id="KW-0808">Transferase</keyword>
<keyword id="KW-0862">Zinc</keyword>
<keyword id="KW-0863">Zinc-finger</keyword>
<evidence type="ECO:0000255" key="1">
    <source>
        <dbReference type="HAMAP-Rule" id="MF_01395"/>
    </source>
</evidence>
<evidence type="ECO:0000255" key="2">
    <source>
        <dbReference type="PROSITE-ProRule" id="PRU01136"/>
    </source>
</evidence>
<gene>
    <name evidence="1" type="primary">accD</name>
    <name type="ordered locus">Chy400_1787</name>
</gene>
<dbReference type="EC" id="2.1.3.15" evidence="1"/>
<dbReference type="EMBL" id="CP001364">
    <property type="protein sequence ID" value="ACM53196.1"/>
    <property type="molecule type" value="Genomic_DNA"/>
</dbReference>
<dbReference type="SMR" id="B9LE80"/>
<dbReference type="KEGG" id="chl:Chy400_1787"/>
<dbReference type="HOGENOM" id="CLU_015486_1_1_0"/>
<dbReference type="OrthoDB" id="9772975at2"/>
<dbReference type="UniPathway" id="UPA00655">
    <property type="reaction ID" value="UER00711"/>
</dbReference>
<dbReference type="GO" id="GO:0009317">
    <property type="term" value="C:acetyl-CoA carboxylase complex"/>
    <property type="evidence" value="ECO:0007669"/>
    <property type="project" value="InterPro"/>
</dbReference>
<dbReference type="GO" id="GO:0003989">
    <property type="term" value="F:acetyl-CoA carboxylase activity"/>
    <property type="evidence" value="ECO:0007669"/>
    <property type="project" value="InterPro"/>
</dbReference>
<dbReference type="GO" id="GO:0005524">
    <property type="term" value="F:ATP binding"/>
    <property type="evidence" value="ECO:0007669"/>
    <property type="project" value="UniProtKB-KW"/>
</dbReference>
<dbReference type="GO" id="GO:0016743">
    <property type="term" value="F:carboxyl- or carbamoyltransferase activity"/>
    <property type="evidence" value="ECO:0007669"/>
    <property type="project" value="UniProtKB-UniRule"/>
</dbReference>
<dbReference type="GO" id="GO:0008270">
    <property type="term" value="F:zinc ion binding"/>
    <property type="evidence" value="ECO:0007669"/>
    <property type="project" value="UniProtKB-UniRule"/>
</dbReference>
<dbReference type="GO" id="GO:0006633">
    <property type="term" value="P:fatty acid biosynthetic process"/>
    <property type="evidence" value="ECO:0007669"/>
    <property type="project" value="UniProtKB-KW"/>
</dbReference>
<dbReference type="GO" id="GO:2001295">
    <property type="term" value="P:malonyl-CoA biosynthetic process"/>
    <property type="evidence" value="ECO:0007669"/>
    <property type="project" value="UniProtKB-UniRule"/>
</dbReference>
<dbReference type="Gene3D" id="3.90.226.10">
    <property type="entry name" value="2-enoyl-CoA Hydratase, Chain A, domain 1"/>
    <property type="match status" value="1"/>
</dbReference>
<dbReference type="HAMAP" id="MF_01395">
    <property type="entry name" value="AcetylCoA_CT_beta"/>
    <property type="match status" value="1"/>
</dbReference>
<dbReference type="InterPro" id="IPR034733">
    <property type="entry name" value="AcCoA_carboxyl_beta"/>
</dbReference>
<dbReference type="InterPro" id="IPR000438">
    <property type="entry name" value="Acetyl_CoA_COase_Trfase_b_su"/>
</dbReference>
<dbReference type="InterPro" id="IPR029045">
    <property type="entry name" value="ClpP/crotonase-like_dom_sf"/>
</dbReference>
<dbReference type="InterPro" id="IPR011762">
    <property type="entry name" value="COA_CT_N"/>
</dbReference>
<dbReference type="InterPro" id="IPR041010">
    <property type="entry name" value="Znf-ACC"/>
</dbReference>
<dbReference type="NCBIfam" id="TIGR00515">
    <property type="entry name" value="accD"/>
    <property type="match status" value="1"/>
</dbReference>
<dbReference type="PANTHER" id="PTHR42995">
    <property type="entry name" value="ACETYL-COENZYME A CARBOXYLASE CARBOXYL TRANSFERASE SUBUNIT BETA, CHLOROPLASTIC"/>
    <property type="match status" value="1"/>
</dbReference>
<dbReference type="PANTHER" id="PTHR42995:SF5">
    <property type="entry name" value="ACETYL-COENZYME A CARBOXYLASE CARBOXYL TRANSFERASE SUBUNIT BETA, CHLOROPLASTIC"/>
    <property type="match status" value="1"/>
</dbReference>
<dbReference type="Pfam" id="PF01039">
    <property type="entry name" value="Carboxyl_trans"/>
    <property type="match status" value="1"/>
</dbReference>
<dbReference type="Pfam" id="PF17848">
    <property type="entry name" value="Zn_ribbon_ACC"/>
    <property type="match status" value="1"/>
</dbReference>
<dbReference type="PRINTS" id="PR01070">
    <property type="entry name" value="ACCCTRFRASEB"/>
</dbReference>
<dbReference type="SUPFAM" id="SSF52096">
    <property type="entry name" value="ClpP/crotonase"/>
    <property type="match status" value="1"/>
</dbReference>
<dbReference type="PROSITE" id="PS50980">
    <property type="entry name" value="COA_CT_NTER"/>
    <property type="match status" value="1"/>
</dbReference>
<sequence>MKEFFRLSRKGFTGREDQDSAQIPDDLWVKCSSCRELIYKKQLNDNLKVCPKCGHHMRLSAHEWLGLLDVGSFREMDANLLPTDPLGFVTDEESYAAKLAKTQQRTGMADAVIAGIGAISNMQICVAVADFSFMGASMGSVYGEKMARSAERAAELGVPLLTINTSGGARQQEGVIGLMQMAKVTMALTRLADAGQPHIALLVDPCYGGVTASYPSVADIIIAEPGANIGFAGKRLIEQIMRQKLPAGFQTAEFMLEHGMIDMVVPRSEMRDTLARILRLYRQRSTSPAKAELAGRRATLPQPIM</sequence>